<keyword id="KW-0067">ATP-binding</keyword>
<keyword id="KW-1035">Host cytoplasm</keyword>
<keyword id="KW-0378">Hydrolase</keyword>
<keyword id="KW-0489">Methyltransferase</keyword>
<keyword id="KW-0506">mRNA capping</keyword>
<keyword id="KW-0507">mRNA processing</keyword>
<keyword id="KW-0511">Multifunctional enzyme</keyword>
<keyword id="KW-0547">Nucleotide-binding</keyword>
<keyword id="KW-0548">Nucleotidyltransferase</keyword>
<keyword id="KW-1185">Reference proteome</keyword>
<keyword id="KW-0696">RNA-directed RNA polymerase</keyword>
<keyword id="KW-0949">S-adenosyl-L-methionine</keyword>
<keyword id="KW-0808">Transferase</keyword>
<keyword id="KW-0693">Viral RNA replication</keyword>
<keyword id="KW-0946">Virion</keyword>
<sequence>MMDVTEVYDDPIDPVEPEGEWNSSPVVPNILRNSDYNLNSPLLEDPANLMIQWLTSGNRPSRMNVTENTTRSYKVLRALFKGVDIATIKIGGVGAQAMMGLWVLGSHSESSRSRKCLADLSAFYQRTLPIESILNHTLMNRGLQTPREGVLSGLNRVSYDQSFGRYLGNLYSSYLLFHVIILYMNALDWEEEKTILALWRDITSIDIKNDRVYFKDPLWGKLLVTKDFVYAHNSNCLFDKNYTLMLKDLFLSRFNSLLILVSPPDSRYSDDLAANLCRLYISGDRLLSSCGNAGYDVIKMLEPCVVDLLVQRAETFRPLIHSLGEFPAFIKDKTTQLIGTFGPCASQFFSMLQQFDNIHDLVFIYGCYRHWGHPYIDYRKGLSKLFDQVHMKKTIDQQYQERLASDLARKILRWGFEKYSKWYLDTGVIPKDHPLAPYIATQTWPPKHVVDLLGDSWHTLPMTQIFEVPESMDPSEILDDKSHSFTRTKLSSWSSEHRGGPVPSEKVIITALSRPPVNPRDFLKSIDQGGLPDDDLIIGLKPKERELKIDGRFFALMSWNLRLYFVITEKLLANHIIPLFDALTMTDNLNKVFKKLIDRVTGQGLKDYSRVTYAFHLDYEKWNNHQRLESTKDVFSVLDRAFGMKKVFSRTHEFFQKSWIYYSDRSDLIGIWKDQIYCLDMTEGPTCWNGQDGGLEGLRQKGWSLVSLLMIERESKTRNTRTKILAQGDNQVLCPTYMLSSGLNNEGLRYELENISKNAMSIYRAIEDGASKLGLIIKKEETMCSFDFLIYGKTPLFRGNILVPESKRWARVSCISNDQIVNLANIMSTVSTNALTVAQHSQSLVKPMRDFLLMSVQAIYHYLLFSPIIKDRVYKVLNSKDDDFLLAMSRIIYLDPSLGGVSGMSLGRFPIRQFSDPVSEGLTFWKEIWLSSSETWIHHLCQEAGNPDLGDRSLESFTRLLEDPTTLNIRGGASPTILLKEAIRKALYDEVDRVENSEFREAIILSKTHRDNFILFLKSIEPLFPRFLSELFSSSFLGIPESIIGLIQNSRTVRRQFRKSLSKTLEESFLNSEIHGINRVTQTPQRLGRVWTCSAERADQLREISWGRKVVGTTVPNPSEMLTLVPKSSVACGCYTREVGNPRISVSVLPSFDPSFLSRGPLKGYLGSSTSMSTQLFHSWEKVTNVHVVKRALSLKESINWFVSRESNLAKTLIGNILSLTGPSFPIEEAPVFKRTGSALHRFKSARYSEGGYSAVCPNLLSHISVSTDTMSDLTQDGTNFDFMFQPLMLYAQTWTSELVQKDFRLADSTFHWHLRCQKCIRPIEEVTLDAPQLFDFPDISSRISRMVSGAVPQFRKLPEVGLKAGDLTALSSSERSYHIGTAQGLLYSILVAVHDPGYNDNSLFPVNIYGKVSARGYLRGLARGILIGSSICFLTRMTNININRPLELISGVISYILLKLDNHPSLYIMLKEPELRAEIFSIPQKVPAAYPTTMEEGNRSVLCYLQQVLRYERDSMSFPPGNDILWIFSDFRSIKMTYLTLITFQAYLWLQRVERNLSKQVRVRLRQLNSLMRQVLGGHGEDTIDSDDEILSLLKESLRRTRWVDQEVRHAAKSMTPDLNPVPKISRRMGSSEWICSAQQIAISTSLNPASASDIDLRSLSRQYQNPLISGLRVVQWATGAHYKIKPILNDLDVCPCLSLVIGDGSGGISRVVLSMFPDSKLVFNSLLEVNDLMASGTHPLPPSALMRGGDDITSRVIDFESIWEKPSDLRNPLTWKYFHSIQSKLRSQFDLIVCDAEVTDIESVNKITLLLSDFSMSIKGPLYLIFKTYGTMLVNPDYKAIHHLSRAFPNVTGFVTQMTSSFSSEIYLRFSKTGYFFRDHELLTASTVREMSLVLFNCSNPKSEMLRARTLNYQDLIRGFPPEIISNPYNEMIITLIDSEVESFLVHKVVDDLELKRGAPSKMAIIIAVAILFSNSVLNVSKSLNEPKFFPPSDPKLLRHFNICSSTLLFLSTALGDLSNFTRLHELYNSPVTYYFGKQTIKGRRYLSWSWANSSPIFKKVACNSSISLSSHWIRLIYKIVKTTRLNCSPRDMLRETEACLRTYNKWINIRDTRSRTSILDYCCL</sequence>
<evidence type="ECO:0000250" key="1"/>
<evidence type="ECO:0000250" key="2">
    <source>
        <dbReference type="UniProtKB" id="P03523"/>
    </source>
</evidence>
<evidence type="ECO:0000250" key="3">
    <source>
        <dbReference type="UniProtKB" id="P28887"/>
    </source>
</evidence>
<evidence type="ECO:0000255" key="4">
    <source>
        <dbReference type="PROSITE-ProRule" id="PRU00539"/>
    </source>
</evidence>
<evidence type="ECO:0000255" key="5">
    <source>
        <dbReference type="PROSITE-ProRule" id="PRU00923"/>
    </source>
</evidence>
<evidence type="ECO:0000256" key="6">
    <source>
        <dbReference type="SAM" id="MobiDB-lite"/>
    </source>
</evidence>
<evidence type="ECO:0000305" key="7"/>
<proteinExistence type="inferred from homology"/>
<gene>
    <name type="primary">L</name>
</gene>
<comment type="function">
    <text evidence="2">RNA-directed RNA polymerase that catalyzes the transcription of viral mRNAs, their capping and polyadenylation. The template is composed of the viral RNA tightly encapsidated by the nucleoprotein (N). The viral polymerase binds to the genomic RNA at the 3' leader promoter, and transcribes subsequently all viral mRNAs with a decreasing efficiency. The first gene is the most transcribed, and the last the least transcribed. The viral phosphoprotein acts as a processivity factor. Capping is concomitant with initiation of mRNA transcription. Indeed, a GDP polyribonucleotidyl transferase (PRNTase) adds the cap structure when the nascent RNA chain length has reached few nucleotides. Ribose 2'-O methylation of viral mRNA cap precedes and facilitates subsequent guanine-N-7 methylation, both activities being carried by the viral polymerase. Polyadenylation of mRNAs occur by a stuttering mechanism at a slipery stop site present at the end viral genes. After finishing transcription of a mRNA, the polymerase can resume transcription of the downstream gene.</text>
</comment>
<comment type="function">
    <text evidence="2">RNA-directed RNA polymerase that catalyzes the replication of viral genomic RNA. The template is composed of the viral RNA tightly encapsidated by the nucleoprotein (N). The replicase mode is dependent on intracellular N protein concentration. In this mode, the polymerase replicates the whole viral genome without recognizing transcriptional signals, and the replicated genome is not caped or polyadenylated.</text>
</comment>
<comment type="catalytic activity">
    <reaction evidence="4">
        <text>RNA(n) + a ribonucleoside 5'-triphosphate = RNA(n+1) + diphosphate</text>
        <dbReference type="Rhea" id="RHEA:21248"/>
        <dbReference type="Rhea" id="RHEA-COMP:14527"/>
        <dbReference type="Rhea" id="RHEA-COMP:17342"/>
        <dbReference type="ChEBI" id="CHEBI:33019"/>
        <dbReference type="ChEBI" id="CHEBI:61557"/>
        <dbReference type="ChEBI" id="CHEBI:140395"/>
        <dbReference type="EC" id="2.7.7.48"/>
    </reaction>
</comment>
<comment type="catalytic activity">
    <reaction evidence="2">
        <text>a 5'-end (5'-triphosphoguanosine)-adenylyl-adenylyl-cytidylyl-adenosine in mRNA + 2 S-adenosyl-L-methionine = a 5'-end (N(7)-methyl 5'-triphosphoguanosine)-(2'-O-methyladenylyl)-adenylyl-cytidylyl-adenosine in mRNA + 2 S-adenosyl-L-homocysteine + H(+)</text>
        <dbReference type="Rhea" id="RHEA:65376"/>
        <dbReference type="Rhea" id="RHEA-COMP:16797"/>
        <dbReference type="Rhea" id="RHEA-COMP:16798"/>
        <dbReference type="ChEBI" id="CHEBI:15378"/>
        <dbReference type="ChEBI" id="CHEBI:57856"/>
        <dbReference type="ChEBI" id="CHEBI:59789"/>
        <dbReference type="ChEBI" id="CHEBI:156483"/>
        <dbReference type="ChEBI" id="CHEBI:156484"/>
        <dbReference type="EC" id="2.1.1.375"/>
    </reaction>
</comment>
<comment type="catalytic activity">
    <reaction evidence="2">
        <text>a 5'-end (5'-triphosphoguanosine)-adenylyl-adenylyl-cytidylyl-adenosine in mRNA + S-adenosyl-L-methionine = a 5'-end (5'-triphosphoguanosine)-(2'-O-methyladenylyl)-adenylyl-cytidylyl-adenosine in mRNA + S-adenosyl-L-homocysteine + H(+)</text>
        <dbReference type="Rhea" id="RHEA:65380"/>
        <dbReference type="Rhea" id="RHEA-COMP:16797"/>
        <dbReference type="Rhea" id="RHEA-COMP:16801"/>
        <dbReference type="ChEBI" id="CHEBI:15378"/>
        <dbReference type="ChEBI" id="CHEBI:57856"/>
        <dbReference type="ChEBI" id="CHEBI:59789"/>
        <dbReference type="ChEBI" id="CHEBI:156482"/>
        <dbReference type="ChEBI" id="CHEBI:156484"/>
    </reaction>
</comment>
<comment type="catalytic activity">
    <reaction evidence="3">
        <text>a 5'-end triphospho-adenylyl-adenylyl-cytidylyl-adenosine in mRNA + GDP + H(+) = a 5'-end (5'-triphosphoguanosine)-adenylyl-adenylyl-cytidylyl-adenosine in mRNA + diphosphate</text>
        <dbReference type="Rhea" id="RHEA:65436"/>
        <dbReference type="Rhea" id="RHEA-COMP:16797"/>
        <dbReference type="Rhea" id="RHEA-COMP:16799"/>
        <dbReference type="ChEBI" id="CHEBI:15378"/>
        <dbReference type="ChEBI" id="CHEBI:33019"/>
        <dbReference type="ChEBI" id="CHEBI:58189"/>
        <dbReference type="ChEBI" id="CHEBI:156484"/>
        <dbReference type="ChEBI" id="CHEBI:156503"/>
        <dbReference type="EC" id="2.7.7.88"/>
    </reaction>
</comment>
<comment type="catalytic activity">
    <reaction evidence="2">
        <text>a 5'-end (5'-triphosphoguanosine)-(2'-O-methyladenylyl)-adenylyl-cytidylyl-adenosine in mRNA + S-adenosyl-L-methionine = a 5'-end (N(7)-methyl 5'-triphosphoguanosine)-(2'-O-methyladenylyl)-adenylyl-cytidylyl-adenosine in mRNA + S-adenosyl-L-homocysteine</text>
        <dbReference type="Rhea" id="RHEA:65440"/>
        <dbReference type="Rhea" id="RHEA-COMP:16798"/>
        <dbReference type="Rhea" id="RHEA-COMP:16801"/>
        <dbReference type="ChEBI" id="CHEBI:57856"/>
        <dbReference type="ChEBI" id="CHEBI:59789"/>
        <dbReference type="ChEBI" id="CHEBI:156482"/>
        <dbReference type="ChEBI" id="CHEBI:156483"/>
    </reaction>
</comment>
<comment type="catalytic activity">
    <reaction evidence="3">
        <text>GTP + H2O = GDP + phosphate + H(+)</text>
        <dbReference type="Rhea" id="RHEA:19669"/>
        <dbReference type="ChEBI" id="CHEBI:15377"/>
        <dbReference type="ChEBI" id="CHEBI:15378"/>
        <dbReference type="ChEBI" id="CHEBI:37565"/>
        <dbReference type="ChEBI" id="CHEBI:43474"/>
        <dbReference type="ChEBI" id="CHEBI:58189"/>
    </reaction>
</comment>
<comment type="subunit">
    <text evidence="2">May form homodimer. Interacts with the P protein.</text>
</comment>
<comment type="subcellular location">
    <subcellularLocation>
        <location evidence="2">Virion</location>
    </subcellularLocation>
    <subcellularLocation>
        <location evidence="2">Host cytoplasm</location>
    </subcellularLocation>
    <text evidence="2">L and P are packaged asymmetrically towards the blunt end of the virus.</text>
</comment>
<comment type="similarity">
    <text evidence="7">Belongs to the rhabdoviruses protein L family.</text>
</comment>
<accession>P0C568</accession>
<dbReference type="EC" id="2.7.7.48" evidence="3"/>
<dbReference type="EC" id="3.6.1.-" evidence="2"/>
<dbReference type="EC" id="2.7.7.88" evidence="2"/>
<dbReference type="EC" id="2.1.1.375" evidence="2"/>
<dbReference type="EMBL" id="Y09762">
    <property type="status" value="NOT_ANNOTATED_CDS"/>
    <property type="molecule type" value="Genomic_RNA"/>
</dbReference>
<dbReference type="RefSeq" id="YP_142354.1">
    <property type="nucleotide sequence ID" value="NC_006429.1"/>
</dbReference>
<dbReference type="SMR" id="P0C568"/>
<dbReference type="GeneID" id="3159474"/>
<dbReference type="KEGG" id="vg:3159474"/>
<dbReference type="Proteomes" id="UP000006826">
    <property type="component" value="Segment"/>
</dbReference>
<dbReference type="GO" id="GO:0030430">
    <property type="term" value="C:host cell cytoplasm"/>
    <property type="evidence" value="ECO:0007669"/>
    <property type="project" value="UniProtKB-SubCell"/>
</dbReference>
<dbReference type="GO" id="GO:0044423">
    <property type="term" value="C:virion component"/>
    <property type="evidence" value="ECO:0007669"/>
    <property type="project" value="UniProtKB-KW"/>
</dbReference>
<dbReference type="GO" id="GO:0005524">
    <property type="term" value="F:ATP binding"/>
    <property type="evidence" value="ECO:0007669"/>
    <property type="project" value="UniProtKB-KW"/>
</dbReference>
<dbReference type="GO" id="GO:0003924">
    <property type="term" value="F:GTPase activity"/>
    <property type="evidence" value="ECO:0007669"/>
    <property type="project" value="RHEA"/>
</dbReference>
<dbReference type="GO" id="GO:0004482">
    <property type="term" value="F:mRNA 5'-cap (guanine-N7-)-methyltransferase activity"/>
    <property type="evidence" value="ECO:0007669"/>
    <property type="project" value="InterPro"/>
</dbReference>
<dbReference type="GO" id="GO:0003968">
    <property type="term" value="F:RNA-directed RNA polymerase activity"/>
    <property type="evidence" value="ECO:0007669"/>
    <property type="project" value="UniProtKB-KW"/>
</dbReference>
<dbReference type="GO" id="GO:0039689">
    <property type="term" value="P:negative stranded viral RNA replication"/>
    <property type="evidence" value="ECO:0000250"/>
    <property type="project" value="UniProtKB"/>
</dbReference>
<dbReference type="InterPro" id="IPR039530">
    <property type="entry name" value="L_methyltransferase_rhabdo"/>
</dbReference>
<dbReference type="InterPro" id="IPR039736">
    <property type="entry name" value="L_poly_C"/>
</dbReference>
<dbReference type="InterPro" id="IPR048398">
    <property type="entry name" value="Methyltrans_Mon_C"/>
</dbReference>
<dbReference type="InterPro" id="IPR048397">
    <property type="entry name" value="Methyltrans_Mon_CD"/>
</dbReference>
<dbReference type="InterPro" id="IPR026890">
    <property type="entry name" value="Mononeg_mRNAcap"/>
</dbReference>
<dbReference type="InterPro" id="IPR014023">
    <property type="entry name" value="Mononeg_RNA_pol_cat"/>
</dbReference>
<dbReference type="InterPro" id="IPR025786">
    <property type="entry name" value="Mononega_L_MeTrfase"/>
</dbReference>
<dbReference type="InterPro" id="IPR017234">
    <property type="entry name" value="RNA-dir_pol_rhabdovirus"/>
</dbReference>
<dbReference type="NCBIfam" id="TIGR04198">
    <property type="entry name" value="paramyx_RNAcap"/>
    <property type="match status" value="1"/>
</dbReference>
<dbReference type="Pfam" id="PF21080">
    <property type="entry name" value="Methyltrans_Mon_1st"/>
    <property type="match status" value="1"/>
</dbReference>
<dbReference type="Pfam" id="PF14314">
    <property type="entry name" value="Methyltrans_Mon_2nd"/>
    <property type="match status" value="1"/>
</dbReference>
<dbReference type="Pfam" id="PF21081">
    <property type="entry name" value="Methyltrans_Mon_3rd"/>
    <property type="match status" value="1"/>
</dbReference>
<dbReference type="Pfam" id="PF14318">
    <property type="entry name" value="Mononeg_mRNAcap"/>
    <property type="match status" value="1"/>
</dbReference>
<dbReference type="Pfam" id="PF00946">
    <property type="entry name" value="Mononeg_RNA_pol"/>
    <property type="match status" value="1"/>
</dbReference>
<dbReference type="PIRSF" id="PIRSF037546">
    <property type="entry name" value="RNA_pol_RhabdoV_sub"/>
    <property type="match status" value="1"/>
</dbReference>
<dbReference type="PROSITE" id="PS50526">
    <property type="entry name" value="RDRP_SSRNA_NEG_NONSEG"/>
    <property type="match status" value="1"/>
</dbReference>
<dbReference type="PROSITE" id="PS51590">
    <property type="entry name" value="SAM_MT_MNV_L"/>
    <property type="match status" value="1"/>
</dbReference>
<name>L_MOKV</name>
<organism>
    <name type="scientific">Mokola virus</name>
    <name type="common">MOKV</name>
    <dbReference type="NCBI Taxonomy" id="12538"/>
    <lineage>
        <taxon>Viruses</taxon>
        <taxon>Riboviria</taxon>
        <taxon>Orthornavirae</taxon>
        <taxon>Negarnaviricota</taxon>
        <taxon>Haploviricotina</taxon>
        <taxon>Monjiviricetes</taxon>
        <taxon>Mononegavirales</taxon>
        <taxon>Rhabdoviridae</taxon>
        <taxon>Alpharhabdovirinae</taxon>
        <taxon>Lyssavirus</taxon>
    </lineage>
</organism>
<feature type="chain" id="PRO_0000294416" description="Large structural protein">
    <location>
        <begin position="1"/>
        <end position="2127"/>
    </location>
</feature>
<feature type="domain" description="RdRp catalytic" evidence="4">
    <location>
        <begin position="611"/>
        <end position="799"/>
    </location>
</feature>
<feature type="domain" description="Mononegavirus-type SAM-dependent 2'-O-MTase" evidence="5">
    <location>
        <begin position="1674"/>
        <end position="1871"/>
    </location>
</feature>
<feature type="region of interest" description="Disordered" evidence="6">
    <location>
        <begin position="1"/>
        <end position="21"/>
    </location>
</feature>
<feature type="region of interest" description="Interaction with P protein" evidence="1">
    <location>
        <begin position="1562"/>
        <end position="2127"/>
    </location>
</feature>
<feature type="compositionally biased region" description="Acidic residues" evidence="6">
    <location>
        <begin position="1"/>
        <end position="19"/>
    </location>
</feature>
<organismHost>
    <name type="scientific">Canis lupus familiaris</name>
    <name type="common">Dog</name>
    <name type="synonym">Canis familiaris</name>
    <dbReference type="NCBI Taxonomy" id="9615"/>
</organismHost>
<organismHost>
    <name type="scientific">Chodsigoa caovansunga</name>
    <name type="common">Van Sung's shrew</name>
    <dbReference type="NCBI Taxonomy" id="269271"/>
</organismHost>
<organismHost>
    <name type="scientific">Felis catus</name>
    <name type="common">Cat</name>
    <name type="synonym">Felis silvestris catus</name>
    <dbReference type="NCBI Taxonomy" id="9685"/>
</organismHost>
<organismHost>
    <name type="scientific">Rodentia</name>
    <dbReference type="NCBI Taxonomy" id="9989"/>
</organismHost>
<protein>
    <recommendedName>
        <fullName>Large structural protein</fullName>
        <shortName>Protein L</shortName>
    </recommendedName>
    <alternativeName>
        <fullName>Replicase</fullName>
    </alternativeName>
    <alternativeName>
        <fullName>Transcriptase</fullName>
    </alternativeName>
    <domain>
        <recommendedName>
            <fullName>RNA-directed RNA polymerase</fullName>
            <ecNumber evidence="3">2.7.7.48</ecNumber>
        </recommendedName>
    </domain>
    <domain>
        <recommendedName>
            <fullName evidence="2">GTP phosphohydrolase</fullName>
            <ecNumber evidence="2">3.6.1.-</ecNumber>
        </recommendedName>
    </domain>
    <domain>
        <recommendedName>
            <fullName evidence="7">GDP polyribonucleotidyltransferase</fullName>
            <ecNumber evidence="2">2.7.7.88</ecNumber>
        </recommendedName>
        <alternativeName>
            <fullName evidence="7">PRNTase</fullName>
        </alternativeName>
    </domain>
    <domain>
        <recommendedName>
            <fullName evidence="7">mRNA cap methyltransferase</fullName>
            <ecNumber evidence="2">2.1.1.375</ecNumber>
        </recommendedName>
        <alternativeName>
            <fullName evidence="2">mRNA (guanine-N(7)-)-methyltransferase</fullName>
            <shortName evidence="2">G-N7-MTase</shortName>
        </alternativeName>
        <alternativeName>
            <fullName evidence="2">mRNA (nucleoside-2'-O-)-methyltransferase</fullName>
            <shortName evidence="2">N1-2'-O-MTase</shortName>
        </alternativeName>
    </domain>
</protein>
<reference key="1">
    <citation type="journal article" date="1997" name="J. Gen. Virol.">
        <title>The complete Mokola virus genome sequence: structure of the RNA-dependent RNA polymerase.</title>
        <authorList>
            <person name="Le Mercier P."/>
            <person name="Jacob Y."/>
            <person name="Tordo N."/>
        </authorList>
    </citation>
    <scope>NUCLEOTIDE SEQUENCE [GENOMIC RNA]</scope>
</reference>